<keyword id="KW-0066">ATP synthesis</keyword>
<keyword id="KW-0067">ATP-binding</keyword>
<keyword id="KW-0139">CF(1)</keyword>
<keyword id="KW-0150">Chloroplast</keyword>
<keyword id="KW-0375">Hydrogen ion transport</keyword>
<keyword id="KW-0406">Ion transport</keyword>
<keyword id="KW-0472">Membrane</keyword>
<keyword id="KW-0547">Nucleotide-binding</keyword>
<keyword id="KW-0934">Plastid</keyword>
<keyword id="KW-0793">Thylakoid</keyword>
<keyword id="KW-1278">Translocase</keyword>
<keyword id="KW-0813">Transport</keyword>
<organism>
    <name type="scientific">Daucus carota</name>
    <name type="common">Wild carrot</name>
    <dbReference type="NCBI Taxonomy" id="4039"/>
    <lineage>
        <taxon>Eukaryota</taxon>
        <taxon>Viridiplantae</taxon>
        <taxon>Streptophyta</taxon>
        <taxon>Embryophyta</taxon>
        <taxon>Tracheophyta</taxon>
        <taxon>Spermatophyta</taxon>
        <taxon>Magnoliopsida</taxon>
        <taxon>eudicotyledons</taxon>
        <taxon>Gunneridae</taxon>
        <taxon>Pentapetalae</taxon>
        <taxon>asterids</taxon>
        <taxon>campanulids</taxon>
        <taxon>Apiales</taxon>
        <taxon>Apiaceae</taxon>
        <taxon>Apioideae</taxon>
        <taxon>Scandiceae</taxon>
        <taxon>Daucinae</taxon>
        <taxon>Daucus</taxon>
        <taxon>Daucus sect. Daucus</taxon>
    </lineage>
</organism>
<sequence>MVTIRADEISKIIRERIEEYNREVKIVNTGTVLQVGDGIARIHGLDEVMAGELVEFQEGTVGIALNLESTNVGVVLMGDGLLIQEGSSVKATGRIAQIPVSEAYLGRVVNALAKPIDGRGEISASEYRLIESPAPGIISRRSVYEPLQTGLIAIDSMIPIGRGQRELIIGDRQTGKTAVATDTILNQQGQNVICVYVAIGQKASSVAQVVTNFQERGAMEYTIVVAETADSPATLQYLAPYTGAALAEFFMYRKRHTLIIYDDPSKQAQAYRQMSLLLRRPPGREAYPGDVFYLHSRLLERAAKLGSLLGEGSMTALPIVETQSGDVSAYIPTNVISITDGQIFLSADLFNAGIRPAINVGISVSRVGSAAQIKAMKQVAGKLKLELAQFAELEAFAQFASDLDKATQNQLARGQRLRELLKQSQSAPLAVEEQIMTIYTGTNGYLDSLEIGQVRKFLVELRTYLKTNKPQFQEIISSTKIFTEEAEALLKEAIQEQMERFILQEQV</sequence>
<proteinExistence type="inferred from homology"/>
<name>ATPA_DAUCA</name>
<feature type="chain" id="PRO_0000275165" description="ATP synthase subunit alpha, chloroplastic">
    <location>
        <begin position="1"/>
        <end position="507"/>
    </location>
</feature>
<feature type="binding site" evidence="1">
    <location>
        <begin position="170"/>
        <end position="177"/>
    </location>
    <ligand>
        <name>ATP</name>
        <dbReference type="ChEBI" id="CHEBI:30616"/>
    </ligand>
</feature>
<feature type="site" description="Required for activity" evidence="1">
    <location>
        <position position="363"/>
    </location>
</feature>
<dbReference type="EC" id="7.1.2.2" evidence="1"/>
<dbReference type="EMBL" id="DQ898156">
    <property type="protein sequence ID" value="ABI32409.1"/>
    <property type="molecule type" value="Genomic_DNA"/>
</dbReference>
<dbReference type="RefSeq" id="YP_740102.1">
    <property type="nucleotide sequence ID" value="NC_008325.1"/>
</dbReference>
<dbReference type="SMR" id="Q0G9X7"/>
<dbReference type="GeneID" id="4266712"/>
<dbReference type="OMA" id="WRISHIR"/>
<dbReference type="GO" id="GO:0009535">
    <property type="term" value="C:chloroplast thylakoid membrane"/>
    <property type="evidence" value="ECO:0007669"/>
    <property type="project" value="UniProtKB-SubCell"/>
</dbReference>
<dbReference type="GO" id="GO:0045259">
    <property type="term" value="C:proton-transporting ATP synthase complex"/>
    <property type="evidence" value="ECO:0007669"/>
    <property type="project" value="UniProtKB-KW"/>
</dbReference>
<dbReference type="GO" id="GO:0043531">
    <property type="term" value="F:ADP binding"/>
    <property type="evidence" value="ECO:0007669"/>
    <property type="project" value="TreeGrafter"/>
</dbReference>
<dbReference type="GO" id="GO:0005524">
    <property type="term" value="F:ATP binding"/>
    <property type="evidence" value="ECO:0007669"/>
    <property type="project" value="UniProtKB-UniRule"/>
</dbReference>
<dbReference type="GO" id="GO:0046933">
    <property type="term" value="F:proton-transporting ATP synthase activity, rotational mechanism"/>
    <property type="evidence" value="ECO:0007669"/>
    <property type="project" value="UniProtKB-UniRule"/>
</dbReference>
<dbReference type="CDD" id="cd18113">
    <property type="entry name" value="ATP-synt_F1_alpha_C"/>
    <property type="match status" value="1"/>
</dbReference>
<dbReference type="CDD" id="cd18116">
    <property type="entry name" value="ATP-synt_F1_alpha_N"/>
    <property type="match status" value="1"/>
</dbReference>
<dbReference type="CDD" id="cd01132">
    <property type="entry name" value="F1-ATPase_alpha_CD"/>
    <property type="match status" value="1"/>
</dbReference>
<dbReference type="FunFam" id="1.20.150.20:FF:000001">
    <property type="entry name" value="ATP synthase subunit alpha"/>
    <property type="match status" value="1"/>
</dbReference>
<dbReference type="FunFam" id="2.40.30.20:FF:000001">
    <property type="entry name" value="ATP synthase subunit alpha"/>
    <property type="match status" value="1"/>
</dbReference>
<dbReference type="FunFam" id="3.40.50.300:FF:000002">
    <property type="entry name" value="ATP synthase subunit alpha"/>
    <property type="match status" value="1"/>
</dbReference>
<dbReference type="Gene3D" id="2.40.30.20">
    <property type="match status" value="1"/>
</dbReference>
<dbReference type="Gene3D" id="1.20.150.20">
    <property type="entry name" value="ATP synthase alpha/beta chain, C-terminal domain"/>
    <property type="match status" value="1"/>
</dbReference>
<dbReference type="Gene3D" id="3.40.50.300">
    <property type="entry name" value="P-loop containing nucleotide triphosphate hydrolases"/>
    <property type="match status" value="1"/>
</dbReference>
<dbReference type="HAMAP" id="MF_01346">
    <property type="entry name" value="ATP_synth_alpha_bact"/>
    <property type="match status" value="1"/>
</dbReference>
<dbReference type="InterPro" id="IPR023366">
    <property type="entry name" value="ATP_synth_asu-like_sf"/>
</dbReference>
<dbReference type="InterPro" id="IPR000793">
    <property type="entry name" value="ATP_synth_asu_C"/>
</dbReference>
<dbReference type="InterPro" id="IPR038376">
    <property type="entry name" value="ATP_synth_asu_C_sf"/>
</dbReference>
<dbReference type="InterPro" id="IPR033732">
    <property type="entry name" value="ATP_synth_F1_a_nt-bd_dom"/>
</dbReference>
<dbReference type="InterPro" id="IPR005294">
    <property type="entry name" value="ATP_synth_F1_asu"/>
</dbReference>
<dbReference type="InterPro" id="IPR020003">
    <property type="entry name" value="ATPase_a/bsu_AS"/>
</dbReference>
<dbReference type="InterPro" id="IPR004100">
    <property type="entry name" value="ATPase_F1/V1/A1_a/bsu_N"/>
</dbReference>
<dbReference type="InterPro" id="IPR036121">
    <property type="entry name" value="ATPase_F1/V1/A1_a/bsu_N_sf"/>
</dbReference>
<dbReference type="InterPro" id="IPR000194">
    <property type="entry name" value="ATPase_F1/V1/A1_a/bsu_nucl-bd"/>
</dbReference>
<dbReference type="InterPro" id="IPR027417">
    <property type="entry name" value="P-loop_NTPase"/>
</dbReference>
<dbReference type="NCBIfam" id="TIGR00962">
    <property type="entry name" value="atpA"/>
    <property type="match status" value="1"/>
</dbReference>
<dbReference type="NCBIfam" id="NF009884">
    <property type="entry name" value="PRK13343.1"/>
    <property type="match status" value="1"/>
</dbReference>
<dbReference type="PANTHER" id="PTHR48082">
    <property type="entry name" value="ATP SYNTHASE SUBUNIT ALPHA, MITOCHONDRIAL"/>
    <property type="match status" value="1"/>
</dbReference>
<dbReference type="PANTHER" id="PTHR48082:SF2">
    <property type="entry name" value="ATP SYNTHASE SUBUNIT ALPHA, MITOCHONDRIAL"/>
    <property type="match status" value="1"/>
</dbReference>
<dbReference type="Pfam" id="PF00006">
    <property type="entry name" value="ATP-synt_ab"/>
    <property type="match status" value="1"/>
</dbReference>
<dbReference type="Pfam" id="PF00306">
    <property type="entry name" value="ATP-synt_ab_C"/>
    <property type="match status" value="1"/>
</dbReference>
<dbReference type="Pfam" id="PF02874">
    <property type="entry name" value="ATP-synt_ab_N"/>
    <property type="match status" value="1"/>
</dbReference>
<dbReference type="PIRSF" id="PIRSF039088">
    <property type="entry name" value="F_ATPase_subunit_alpha"/>
    <property type="match status" value="1"/>
</dbReference>
<dbReference type="SUPFAM" id="SSF47917">
    <property type="entry name" value="C-terminal domain of alpha and beta subunits of F1 ATP synthase"/>
    <property type="match status" value="1"/>
</dbReference>
<dbReference type="SUPFAM" id="SSF50615">
    <property type="entry name" value="N-terminal domain of alpha and beta subunits of F1 ATP synthase"/>
    <property type="match status" value="1"/>
</dbReference>
<dbReference type="SUPFAM" id="SSF52540">
    <property type="entry name" value="P-loop containing nucleoside triphosphate hydrolases"/>
    <property type="match status" value="1"/>
</dbReference>
<dbReference type="PROSITE" id="PS00152">
    <property type="entry name" value="ATPASE_ALPHA_BETA"/>
    <property type="match status" value="1"/>
</dbReference>
<comment type="function">
    <text evidence="1">Produces ATP from ADP in the presence of a proton gradient across the membrane. The alpha chain is a regulatory subunit.</text>
</comment>
<comment type="catalytic activity">
    <reaction evidence="1">
        <text>ATP + H2O + 4 H(+)(in) = ADP + phosphate + 5 H(+)(out)</text>
        <dbReference type="Rhea" id="RHEA:57720"/>
        <dbReference type="ChEBI" id="CHEBI:15377"/>
        <dbReference type="ChEBI" id="CHEBI:15378"/>
        <dbReference type="ChEBI" id="CHEBI:30616"/>
        <dbReference type="ChEBI" id="CHEBI:43474"/>
        <dbReference type="ChEBI" id="CHEBI:456216"/>
        <dbReference type="EC" id="7.1.2.2"/>
    </reaction>
</comment>
<comment type="subunit">
    <text evidence="1">F-type ATPases have 2 components, CF(1) - the catalytic core - and CF(0) - the membrane proton channel. CF(1) has five subunits: alpha(3), beta(3), gamma(1), delta(1), epsilon(1). CF(0) has four main subunits: a, b, b' and c.</text>
</comment>
<comment type="subcellular location">
    <subcellularLocation>
        <location evidence="1">Plastid</location>
        <location evidence="1">Chloroplast thylakoid membrane</location>
        <topology evidence="1">Peripheral membrane protein</topology>
    </subcellularLocation>
</comment>
<comment type="similarity">
    <text evidence="1">Belongs to the ATPase alpha/beta chains family.</text>
</comment>
<gene>
    <name evidence="1" type="primary">atpA</name>
</gene>
<geneLocation type="chloroplast"/>
<accession>Q0G9X7</accession>
<reference key="1">
    <citation type="journal article" date="2006" name="BMC Genomics">
        <title>Complete plastid genome sequence of Daucus carota: implications for biotechnology and phylogeny of angiosperms.</title>
        <authorList>
            <person name="Ruhlman T."/>
            <person name="Lee S.-B."/>
            <person name="Jansen R.K."/>
            <person name="Hostetler J.B."/>
            <person name="Tallon L.J."/>
            <person name="Town C.D."/>
            <person name="Daniell H."/>
        </authorList>
    </citation>
    <scope>NUCLEOTIDE SEQUENCE [LARGE SCALE GENOMIC DNA]</scope>
    <source>
        <strain>cv. Danvers Half-long</strain>
    </source>
</reference>
<protein>
    <recommendedName>
        <fullName evidence="1">ATP synthase subunit alpha, chloroplastic</fullName>
        <ecNumber evidence="1">7.1.2.2</ecNumber>
    </recommendedName>
    <alternativeName>
        <fullName evidence="1">ATP synthase F1 sector subunit alpha</fullName>
    </alternativeName>
    <alternativeName>
        <fullName evidence="1">F-ATPase subunit alpha</fullName>
    </alternativeName>
</protein>
<evidence type="ECO:0000255" key="1">
    <source>
        <dbReference type="HAMAP-Rule" id="MF_01346"/>
    </source>
</evidence>